<organism>
    <name type="scientific">Rattus norvegicus</name>
    <name type="common">Rat</name>
    <dbReference type="NCBI Taxonomy" id="10116"/>
    <lineage>
        <taxon>Eukaryota</taxon>
        <taxon>Metazoa</taxon>
        <taxon>Chordata</taxon>
        <taxon>Craniata</taxon>
        <taxon>Vertebrata</taxon>
        <taxon>Euteleostomi</taxon>
        <taxon>Mammalia</taxon>
        <taxon>Eutheria</taxon>
        <taxon>Euarchontoglires</taxon>
        <taxon>Glires</taxon>
        <taxon>Rodentia</taxon>
        <taxon>Myomorpha</taxon>
        <taxon>Muroidea</taxon>
        <taxon>Muridae</taxon>
        <taxon>Murinae</taxon>
        <taxon>Rattus</taxon>
    </lineage>
</organism>
<keyword id="KW-0325">Glycoprotein</keyword>
<keyword id="KW-0378">Hydrolase</keyword>
<keyword id="KW-1185">Reference proteome</keyword>
<keyword id="KW-0964">Secreted</keyword>
<keyword id="KW-0732">Signal</keyword>
<feature type="signal peptide" evidence="2">
    <location>
        <begin position="1"/>
        <end position="25"/>
    </location>
</feature>
<feature type="chain" id="PRO_0000292882" description="Biotinidase" evidence="2">
    <location>
        <begin position="26"/>
        <end position="521"/>
    </location>
</feature>
<feature type="domain" description="CN hydrolase" evidence="3">
    <location>
        <begin position="50"/>
        <end position="329"/>
    </location>
</feature>
<feature type="active site" description="Proton acceptor" evidence="3">
    <location>
        <position position="90"/>
    </location>
</feature>
<feature type="active site" description="Proton donor" evidence="3">
    <location>
        <position position="190"/>
    </location>
</feature>
<feature type="active site" description="Nucleophile" evidence="3">
    <location>
        <position position="223"/>
    </location>
</feature>
<feature type="glycosylation site" description="N-linked (GlcNAc...) asparagine" evidence="2">
    <location>
        <position position="128"/>
    </location>
</feature>
<feature type="glycosylation site" description="N-linked (GlcNAc...) asparagine" evidence="2">
    <location>
        <position position="181"/>
    </location>
</feature>
<feature type="glycosylation site" description="N-linked (GlcNAc...) asparagine" evidence="2">
    <location>
        <position position="380"/>
    </location>
</feature>
<dbReference type="EC" id="3.5.1.12" evidence="1"/>
<dbReference type="EMBL" id="BC090017">
    <property type="protein sequence ID" value="AAH90017.1"/>
    <property type="molecule type" value="mRNA"/>
</dbReference>
<dbReference type="RefSeq" id="NP_001012047.1">
    <property type="nucleotide sequence ID" value="NM_001012047.2"/>
</dbReference>
<dbReference type="RefSeq" id="XP_006252673.1">
    <property type="nucleotide sequence ID" value="XM_006252611.2"/>
</dbReference>
<dbReference type="RefSeq" id="XP_006252674.1">
    <property type="nucleotide sequence ID" value="XM_006252612.3"/>
</dbReference>
<dbReference type="RefSeq" id="XP_006252676.1">
    <property type="nucleotide sequence ID" value="XM_006252614.3"/>
</dbReference>
<dbReference type="RefSeq" id="XP_006252677.1">
    <property type="nucleotide sequence ID" value="XM_006252615.4"/>
</dbReference>
<dbReference type="RefSeq" id="XP_006252678.1">
    <property type="nucleotide sequence ID" value="XM_006252616.2"/>
</dbReference>
<dbReference type="RefSeq" id="XP_006252679.1">
    <property type="nucleotide sequence ID" value="XM_006252617.1"/>
</dbReference>
<dbReference type="RefSeq" id="XP_006252680.1">
    <property type="nucleotide sequence ID" value="XM_006252618.4"/>
</dbReference>
<dbReference type="RefSeq" id="XP_006252684.1">
    <property type="nucleotide sequence ID" value="XM_006252622.5"/>
</dbReference>
<dbReference type="RefSeq" id="XP_008769221.1">
    <property type="nucleotide sequence ID" value="XM_008770999.1"/>
</dbReference>
<dbReference type="RefSeq" id="XP_017455568.1">
    <property type="nucleotide sequence ID" value="XM_017600079.3"/>
</dbReference>
<dbReference type="RefSeq" id="XP_038950382.1">
    <property type="nucleotide sequence ID" value="XM_039094454.2"/>
</dbReference>
<dbReference type="RefSeq" id="XP_038950384.1">
    <property type="nucleotide sequence ID" value="XM_039094456.2"/>
</dbReference>
<dbReference type="RefSeq" id="XP_038950385.1">
    <property type="nucleotide sequence ID" value="XM_039094457.2"/>
</dbReference>
<dbReference type="RefSeq" id="XP_063131422.1">
    <property type="nucleotide sequence ID" value="XM_063275352.1"/>
</dbReference>
<dbReference type="SMR" id="Q5FVF9"/>
<dbReference type="FunCoup" id="Q5FVF9">
    <property type="interactions" value="62"/>
</dbReference>
<dbReference type="STRING" id="10116.ENSRNOP00000057779"/>
<dbReference type="GlyCosmos" id="Q5FVF9">
    <property type="glycosylation" value="3 sites, No reported glycans"/>
</dbReference>
<dbReference type="GlyGen" id="Q5FVF9">
    <property type="glycosylation" value="3 sites"/>
</dbReference>
<dbReference type="PhosphoSitePlus" id="Q5FVF9"/>
<dbReference type="PaxDb" id="10116-ENSRNOP00000057779"/>
<dbReference type="GeneID" id="306262"/>
<dbReference type="KEGG" id="rno:306262"/>
<dbReference type="UCSC" id="RGD:1305316">
    <property type="organism name" value="rat"/>
</dbReference>
<dbReference type="AGR" id="RGD:1305316"/>
<dbReference type="CTD" id="686"/>
<dbReference type="RGD" id="1305316">
    <property type="gene designation" value="Btd"/>
</dbReference>
<dbReference type="eggNOG" id="KOG0806">
    <property type="taxonomic scope" value="Eukaryota"/>
</dbReference>
<dbReference type="HOGENOM" id="CLU_033209_0_0_1"/>
<dbReference type="InParanoid" id="Q5FVF9"/>
<dbReference type="PhylomeDB" id="Q5FVF9"/>
<dbReference type="Reactome" id="R-RNO-196780">
    <property type="pathway name" value="Biotin transport and metabolism"/>
</dbReference>
<dbReference type="SABIO-RK" id="Q5FVF9"/>
<dbReference type="PRO" id="PR:Q5FVF9"/>
<dbReference type="Proteomes" id="UP000002494">
    <property type="component" value="Unplaced"/>
</dbReference>
<dbReference type="GO" id="GO:0045177">
    <property type="term" value="C:apical part of cell"/>
    <property type="evidence" value="ECO:0000266"/>
    <property type="project" value="RGD"/>
</dbReference>
<dbReference type="GO" id="GO:0005576">
    <property type="term" value="C:extracellular region"/>
    <property type="evidence" value="ECO:0000266"/>
    <property type="project" value="RGD"/>
</dbReference>
<dbReference type="GO" id="GO:0005730">
    <property type="term" value="C:nucleolus"/>
    <property type="evidence" value="ECO:0000266"/>
    <property type="project" value="RGD"/>
</dbReference>
<dbReference type="GO" id="GO:0043204">
    <property type="term" value="C:perikaryon"/>
    <property type="evidence" value="ECO:0000266"/>
    <property type="project" value="RGD"/>
</dbReference>
<dbReference type="GO" id="GO:0047708">
    <property type="term" value="F:biotinidase activity"/>
    <property type="evidence" value="ECO:0000266"/>
    <property type="project" value="RGD"/>
</dbReference>
<dbReference type="GO" id="GO:0006768">
    <property type="term" value="P:biotin metabolic process"/>
    <property type="evidence" value="ECO:0000266"/>
    <property type="project" value="RGD"/>
</dbReference>
<dbReference type="CDD" id="cd07567">
    <property type="entry name" value="biotinidase_like"/>
    <property type="match status" value="1"/>
</dbReference>
<dbReference type="FunFam" id="3.60.110.10:FF:000001">
    <property type="entry name" value="biotinidase isoform X1"/>
    <property type="match status" value="1"/>
</dbReference>
<dbReference type="Gene3D" id="3.60.110.10">
    <property type="entry name" value="Carbon-nitrogen hydrolase"/>
    <property type="match status" value="1"/>
</dbReference>
<dbReference type="InterPro" id="IPR012101">
    <property type="entry name" value="Biotinidase-like_euk"/>
</dbReference>
<dbReference type="InterPro" id="IPR040154">
    <property type="entry name" value="Biotinidase/VNN"/>
</dbReference>
<dbReference type="InterPro" id="IPR003010">
    <property type="entry name" value="C-N_Hydrolase"/>
</dbReference>
<dbReference type="InterPro" id="IPR036526">
    <property type="entry name" value="C-N_Hydrolase_sf"/>
</dbReference>
<dbReference type="InterPro" id="IPR043957">
    <property type="entry name" value="Vanin_C"/>
</dbReference>
<dbReference type="PANTHER" id="PTHR10609:SF14">
    <property type="entry name" value="BIOTINIDASE"/>
    <property type="match status" value="1"/>
</dbReference>
<dbReference type="PANTHER" id="PTHR10609">
    <property type="entry name" value="BIOTINIDASE-RELATED"/>
    <property type="match status" value="1"/>
</dbReference>
<dbReference type="Pfam" id="PF00795">
    <property type="entry name" value="CN_hydrolase"/>
    <property type="match status" value="1"/>
</dbReference>
<dbReference type="Pfam" id="PF19018">
    <property type="entry name" value="Vanin_C"/>
    <property type="match status" value="1"/>
</dbReference>
<dbReference type="PIRSF" id="PIRSF011861">
    <property type="entry name" value="Biotinidase"/>
    <property type="match status" value="1"/>
</dbReference>
<dbReference type="SUPFAM" id="SSF56317">
    <property type="entry name" value="Carbon-nitrogen hydrolase"/>
    <property type="match status" value="1"/>
</dbReference>
<dbReference type="PROSITE" id="PS50263">
    <property type="entry name" value="CN_HYDROLASE"/>
    <property type="match status" value="1"/>
</dbReference>
<evidence type="ECO:0000250" key="1">
    <source>
        <dbReference type="UniProtKB" id="P43251"/>
    </source>
</evidence>
<evidence type="ECO:0000255" key="2"/>
<evidence type="ECO:0000255" key="3">
    <source>
        <dbReference type="PROSITE-ProRule" id="PRU00054"/>
    </source>
</evidence>
<evidence type="ECO:0000305" key="4"/>
<evidence type="ECO:0000312" key="5">
    <source>
        <dbReference type="EMBL" id="AAH90017.1"/>
    </source>
</evidence>
<gene>
    <name evidence="5" type="primary">Btd</name>
</gene>
<name>BTD_RAT</name>
<proteinExistence type="evidence at transcript level"/>
<comment type="function">
    <text evidence="1">Catalytic release of biotin from biocytin, the product of biotin-dependent carboxylases degradation.</text>
</comment>
<comment type="catalytic activity">
    <reaction evidence="1">
        <text>biocytin + H2O = biotin + L-lysine</text>
        <dbReference type="Rhea" id="RHEA:77171"/>
        <dbReference type="ChEBI" id="CHEBI:15377"/>
        <dbReference type="ChEBI" id="CHEBI:32551"/>
        <dbReference type="ChEBI" id="CHEBI:57586"/>
        <dbReference type="ChEBI" id="CHEBI:195545"/>
        <dbReference type="EC" id="3.5.1.12"/>
    </reaction>
</comment>
<comment type="catalytic activity">
    <reaction evidence="1">
        <text>biotin amide + H2O = biotin + NH4(+)</text>
        <dbReference type="Rhea" id="RHEA:13081"/>
        <dbReference type="ChEBI" id="CHEBI:15377"/>
        <dbReference type="ChEBI" id="CHEBI:16615"/>
        <dbReference type="ChEBI" id="CHEBI:28938"/>
        <dbReference type="ChEBI" id="CHEBI:57586"/>
    </reaction>
    <physiologicalReaction direction="left-to-right" evidence="1">
        <dbReference type="Rhea" id="RHEA:13082"/>
    </physiologicalReaction>
</comment>
<comment type="subcellular location">
    <subcellularLocation>
        <location evidence="1">Secreted</location>
        <location evidence="1">Extracellular space</location>
    </subcellularLocation>
</comment>
<comment type="similarity">
    <text evidence="4">Belongs to the carbon-nitrogen hydrolase superfamily. BTD/VNN family.</text>
</comment>
<protein>
    <recommendedName>
        <fullName>Biotinidase</fullName>
        <shortName>Biotinase</shortName>
        <ecNumber evidence="1">3.5.1.12</ecNumber>
    </recommendedName>
</protein>
<reference evidence="5" key="1">
    <citation type="journal article" date="2004" name="Genome Res.">
        <title>The status, quality, and expansion of the NIH full-length cDNA project: the Mammalian Gene Collection (MGC).</title>
        <authorList>
            <consortium name="The MGC Project Team"/>
        </authorList>
    </citation>
    <scope>NUCLEOTIDE SEQUENCE [LARGE SCALE MRNA]</scope>
    <source>
        <tissue evidence="5">Liver</tissue>
    </source>
</reference>
<accession>Q5FVF9</accession>
<sequence>MSGARTAHALVFLLGCSALALGVCSASLEHGEAEYYVAAVYEHRSVLSPNPLELSSRQQALELMKQNLDVYEQQVMAAAQKGAHIIVFPEDGIHGFNFTRTSIYPFLDLMPSPRLVSWNPCLEPFRFNDTEVLQRLSCMAIKGKMFLVANLGTKQPCLGSDPGCPQDGRYQFNTNVAFSDNGTLVGRYRKHNLYFEEAFDSPADVDLTTFDTPFAGKFGMFTCFDILFFDPAVRLLRDFEVKHIAYPTAWMNQLPLLAAIEIQKAFATAFGVTVLAANIHHPTLGMTGSGIHTPLKSFWYHNMDDPEGHLIIARVATNPQGLVGTENTTSEMDPSHRKFLKVLSGDPYCEKDAQEVRCDEAAKWNLNAPPTFHSEMMYDNFTLVPVWGKEGHLQVCSNSLCCHLLFERPALSKELYALGVFDGLHTVHGTYYVQACALVKCGGAGFETCGQEISEAEGLFDFHLWGNFSTLYVFPLFLTSGMTLDTPDQLGWESDHYFLRKRGLSSGLVTAALYGRLYERN</sequence>